<dbReference type="EC" id="6.3.2.-" evidence="8"/>
<dbReference type="EMBL" id="DF126466">
    <property type="protein sequence ID" value="GAA89168.1"/>
    <property type="molecule type" value="Genomic_DNA"/>
</dbReference>
<dbReference type="SMR" id="G7XQ31"/>
<dbReference type="STRING" id="1033177.G7XQ31"/>
<dbReference type="VEuPathDB" id="FungiDB:AKAW_07282"/>
<dbReference type="eggNOG" id="KOG1178">
    <property type="taxonomic scope" value="Eukaryota"/>
</dbReference>
<dbReference type="InParanoid" id="G7XQ31"/>
<dbReference type="OrthoDB" id="45369at5052"/>
<dbReference type="GO" id="GO:0005737">
    <property type="term" value="C:cytoplasm"/>
    <property type="evidence" value="ECO:0007669"/>
    <property type="project" value="TreeGrafter"/>
</dbReference>
<dbReference type="GO" id="GO:0016874">
    <property type="term" value="F:ligase activity"/>
    <property type="evidence" value="ECO:0007669"/>
    <property type="project" value="UniProtKB-KW"/>
</dbReference>
<dbReference type="GO" id="GO:0031177">
    <property type="term" value="F:phosphopantetheine binding"/>
    <property type="evidence" value="ECO:0007669"/>
    <property type="project" value="InterPro"/>
</dbReference>
<dbReference type="GO" id="GO:0043041">
    <property type="term" value="P:amino acid activation for nonribosomal peptide biosynthetic process"/>
    <property type="evidence" value="ECO:0007669"/>
    <property type="project" value="TreeGrafter"/>
</dbReference>
<dbReference type="GO" id="GO:0044550">
    <property type="term" value="P:secondary metabolite biosynthetic process"/>
    <property type="evidence" value="ECO:0007669"/>
    <property type="project" value="TreeGrafter"/>
</dbReference>
<dbReference type="CDD" id="cd05918">
    <property type="entry name" value="A_NRPS_SidN3_like"/>
    <property type="match status" value="4"/>
</dbReference>
<dbReference type="CDD" id="cd19542">
    <property type="entry name" value="CT_NRPS-like"/>
    <property type="match status" value="2"/>
</dbReference>
<dbReference type="CDD" id="cd19534">
    <property type="entry name" value="E_NRPS"/>
    <property type="match status" value="1"/>
</dbReference>
<dbReference type="CDD" id="cd19545">
    <property type="entry name" value="FUM14_C_NRPS-like"/>
    <property type="match status" value="1"/>
</dbReference>
<dbReference type="FunFam" id="3.30.559.10:FF:000016">
    <property type="entry name" value="Nonribosomal peptide synthase Pes1"/>
    <property type="match status" value="1"/>
</dbReference>
<dbReference type="FunFam" id="3.30.559.30:FF:000002">
    <property type="entry name" value="Nonribosomal peptide synthase Pes1"/>
    <property type="match status" value="1"/>
</dbReference>
<dbReference type="FunFam" id="3.30.300.30:FF:000015">
    <property type="entry name" value="Nonribosomal peptide synthase SidD"/>
    <property type="match status" value="4"/>
</dbReference>
<dbReference type="FunFam" id="3.30.559.30:FF:000003">
    <property type="entry name" value="Nonribosomal peptide synthase SidD"/>
    <property type="match status" value="1"/>
</dbReference>
<dbReference type="Gene3D" id="3.30.300.30">
    <property type="match status" value="4"/>
</dbReference>
<dbReference type="Gene3D" id="1.10.1200.10">
    <property type="entry name" value="ACP-like"/>
    <property type="match status" value="4"/>
</dbReference>
<dbReference type="Gene3D" id="3.30.559.10">
    <property type="entry name" value="Chloramphenicol acetyltransferase-like domain"/>
    <property type="match status" value="5"/>
</dbReference>
<dbReference type="Gene3D" id="3.40.50.12780">
    <property type="entry name" value="N-terminal domain of ligase-like"/>
    <property type="match status" value="4"/>
</dbReference>
<dbReference type="Gene3D" id="3.30.559.30">
    <property type="entry name" value="Nonribosomal peptide synthetase, condensation domain"/>
    <property type="match status" value="6"/>
</dbReference>
<dbReference type="InterPro" id="IPR010071">
    <property type="entry name" value="AA_adenyl_dom"/>
</dbReference>
<dbReference type="InterPro" id="IPR036736">
    <property type="entry name" value="ACP-like_sf"/>
</dbReference>
<dbReference type="InterPro" id="IPR045851">
    <property type="entry name" value="AMP-bd_C_sf"/>
</dbReference>
<dbReference type="InterPro" id="IPR020845">
    <property type="entry name" value="AMP-binding_CS"/>
</dbReference>
<dbReference type="InterPro" id="IPR000873">
    <property type="entry name" value="AMP-dep_synth/lig_dom"/>
</dbReference>
<dbReference type="InterPro" id="IPR042099">
    <property type="entry name" value="ANL_N_sf"/>
</dbReference>
<dbReference type="InterPro" id="IPR023213">
    <property type="entry name" value="CAT-like_dom_sf"/>
</dbReference>
<dbReference type="InterPro" id="IPR001242">
    <property type="entry name" value="Condensatn"/>
</dbReference>
<dbReference type="InterPro" id="IPR020806">
    <property type="entry name" value="PKS_PP-bd"/>
</dbReference>
<dbReference type="InterPro" id="IPR009081">
    <property type="entry name" value="PP-bd_ACP"/>
</dbReference>
<dbReference type="InterPro" id="IPR006162">
    <property type="entry name" value="Ppantetheine_attach_site"/>
</dbReference>
<dbReference type="NCBIfam" id="TIGR01733">
    <property type="entry name" value="AA-adenyl-dom"/>
    <property type="match status" value="4"/>
</dbReference>
<dbReference type="NCBIfam" id="NF003417">
    <property type="entry name" value="PRK04813.1"/>
    <property type="match status" value="4"/>
</dbReference>
<dbReference type="PANTHER" id="PTHR45527:SF1">
    <property type="entry name" value="FATTY ACID SYNTHASE"/>
    <property type="match status" value="1"/>
</dbReference>
<dbReference type="PANTHER" id="PTHR45527">
    <property type="entry name" value="NONRIBOSOMAL PEPTIDE SYNTHETASE"/>
    <property type="match status" value="1"/>
</dbReference>
<dbReference type="Pfam" id="PF00501">
    <property type="entry name" value="AMP-binding"/>
    <property type="match status" value="4"/>
</dbReference>
<dbReference type="Pfam" id="PF00668">
    <property type="entry name" value="Condensation"/>
    <property type="match status" value="5"/>
</dbReference>
<dbReference type="Pfam" id="PF00550">
    <property type="entry name" value="PP-binding"/>
    <property type="match status" value="4"/>
</dbReference>
<dbReference type="SMART" id="SM00823">
    <property type="entry name" value="PKS_PP"/>
    <property type="match status" value="3"/>
</dbReference>
<dbReference type="SMART" id="SM01294">
    <property type="entry name" value="PKS_PP_betabranch"/>
    <property type="match status" value="1"/>
</dbReference>
<dbReference type="SUPFAM" id="SSF56801">
    <property type="entry name" value="Acetyl-CoA synthetase-like"/>
    <property type="match status" value="4"/>
</dbReference>
<dbReference type="SUPFAM" id="SSF47336">
    <property type="entry name" value="ACP-like"/>
    <property type="match status" value="4"/>
</dbReference>
<dbReference type="SUPFAM" id="SSF52777">
    <property type="entry name" value="CoA-dependent acyltransferases"/>
    <property type="match status" value="11"/>
</dbReference>
<dbReference type="PROSITE" id="PS00455">
    <property type="entry name" value="AMP_BINDING"/>
    <property type="match status" value="2"/>
</dbReference>
<dbReference type="PROSITE" id="PS50075">
    <property type="entry name" value="CARRIER"/>
    <property type="match status" value="4"/>
</dbReference>
<dbReference type="PROSITE" id="PS00012">
    <property type="entry name" value="PHOSPHOPANTETHEINE"/>
    <property type="match status" value="1"/>
</dbReference>
<feature type="chain" id="PRO_0000446432" description="Malformin synthetase mlfA">
    <location>
        <begin position="1"/>
        <end position="5101"/>
    </location>
</feature>
<feature type="domain" description="Carrier 1" evidence="2">
    <location>
        <begin position="757"/>
        <end position="830"/>
    </location>
</feature>
<feature type="domain" description="Carrier 2" evidence="2">
    <location>
        <begin position="1854"/>
        <end position="1931"/>
    </location>
</feature>
<feature type="domain" description="Carrier 3" evidence="2">
    <location>
        <begin position="3032"/>
        <end position="3108"/>
    </location>
</feature>
<feature type="domain" description="Carrier 4" evidence="2">
    <location>
        <begin position="4579"/>
        <end position="4655"/>
    </location>
</feature>
<feature type="region of interest" description="Adenylation 1" evidence="1">
    <location>
        <begin position="225"/>
        <end position="616"/>
    </location>
</feature>
<feature type="region of interest" description="Condensation 1" evidence="1">
    <location>
        <begin position="868"/>
        <end position="1299"/>
    </location>
</feature>
<feature type="region of interest" description="Adenylation 2" evidence="1">
    <location>
        <begin position="1327"/>
        <end position="1716"/>
    </location>
</feature>
<feature type="region of interest" description="Disordered" evidence="3">
    <location>
        <begin position="1932"/>
        <end position="1961"/>
    </location>
</feature>
<feature type="region of interest" description="Disordered" evidence="3">
    <location>
        <begin position="1994"/>
        <end position="2020"/>
    </location>
</feature>
<feature type="region of interest" description="Condensation 2" evidence="1">
    <location>
        <begin position="2066"/>
        <end position="2481"/>
    </location>
</feature>
<feature type="region of interest" description="Adenylation 3" evidence="1">
    <location>
        <begin position="2504"/>
        <end position="2896"/>
    </location>
</feature>
<feature type="region of interest" description="Condensation 3" evidence="1">
    <location>
        <begin position="3125"/>
        <end position="3590"/>
    </location>
</feature>
<feature type="region of interest" description="Condensation 4" evidence="1">
    <location>
        <begin position="3611"/>
        <end position="4030"/>
    </location>
</feature>
<feature type="region of interest" description="Adenylation 4" evidence="1">
    <location>
        <begin position="4055"/>
        <end position="4445"/>
    </location>
</feature>
<feature type="region of interest" description="Condensation 5" evidence="1">
    <location>
        <begin position="4712"/>
        <end position="5097"/>
    </location>
</feature>
<feature type="compositionally biased region" description="Low complexity" evidence="3">
    <location>
        <begin position="1934"/>
        <end position="1958"/>
    </location>
</feature>
<feature type="compositionally biased region" description="Low complexity" evidence="3">
    <location>
        <begin position="1996"/>
        <end position="2013"/>
    </location>
</feature>
<feature type="modified residue" description="O-(pantetheine 4'-phosphoryl)serine" evidence="2">
    <location>
        <position position="791"/>
    </location>
</feature>
<feature type="modified residue" description="O-(pantetheine 4'-phosphoryl)serine" evidence="2">
    <location>
        <position position="1891"/>
    </location>
</feature>
<feature type="modified residue" description="O-(pantetheine 4'-phosphoryl)serine" evidence="2">
    <location>
        <position position="3069"/>
    </location>
</feature>
<feature type="modified residue" description="O-(pantetheine 4'-phosphoryl)serine" evidence="2">
    <location>
        <position position="4616"/>
    </location>
</feature>
<gene>
    <name evidence="9" type="primary">mlfA</name>
    <name type="ORF">AKAW_07282</name>
</gene>
<organism>
    <name type="scientific">Aspergillus kawachii (strain NBRC 4308)</name>
    <name type="common">White koji mold</name>
    <name type="synonym">Aspergillus awamori var. kawachi</name>
    <dbReference type="NCBI Taxonomy" id="1033177"/>
    <lineage>
        <taxon>Eukaryota</taxon>
        <taxon>Fungi</taxon>
        <taxon>Dikarya</taxon>
        <taxon>Ascomycota</taxon>
        <taxon>Pezizomycotina</taxon>
        <taxon>Eurotiomycetes</taxon>
        <taxon>Eurotiomycetidae</taxon>
        <taxon>Eurotiales</taxon>
        <taxon>Aspergillaceae</taxon>
        <taxon>Aspergillus</taxon>
        <taxon>Aspergillus subgen. Circumdati</taxon>
    </lineage>
</organism>
<keyword id="KW-0436">Ligase</keyword>
<keyword id="KW-0596">Phosphopantetheine</keyword>
<keyword id="KW-0597">Phosphoprotein</keyword>
<sequence length="5101" mass="561810">MSRFSCIFPTLTDGYVPNPDHTRAAGRRTYRIDLSGWKAPGSETESLILAAWGLVLSSYVGTDEVAFYVVPTTGPDTTALAELKVEGDMPRQSLTYAAHQLLHPGLVGAGQVSGETANTIITFANDIESLFVTQTEESFLSLHVYRDEQGHISLSLTYYLSLLTDAQAANVGTAMAQALAEVGTCDNDKLVKDLSLMSPAHLEHIWRFNADVPGIWEECFHDVIERHAANRPHSLAVDAWDTELTYTDLVREARLLAAYLQRRGVGPGSVVPISFERSGAALVAMLAVSKAGGAFVSVPPNLPAGRVDAILEVIEAPFVVTWTKYESFWAERLPTLPIDNYPKPAADATVEALGKPEDLFYVIFTSGSTGRPKGCMLSHTNWLNGALRNAPSWKYGPESRVLQMLSHTFDMSLLEICTSLGSGSCVCVPRPEEIETSISDAINRWQVNHVIMTPSLARALRPDDVPGLKTMCLGGEAFPKEIVTMWSERINLWQFYGPSECSINSSSWPITRPDADPLNIGPPNSAACWVVDVHDYNKLVPVGAIGELLVSGPIVGMGYLKNPVKTAEAFLEEVGFVAKDDPQFGGFRFYRTGDLVRWNSDGTITFCGRADTQVKLNGQRLELAEVEYQLGLEAGVQYAIAMAPQAGLCKNNLIAILTVKGTSTGTQDTAADEIPLLDRRDPIVQETVKKLRSQLQHALPRYMVPTIWAFVGRMPMSASGKIDRVKLRDWVQRMSQETFDAITGRSLEAEEHAFGLSRLEQKIQLAWAEALGLSAAEVGLQQPFVALGGDSIKALDAVARCRARQIKISMVHILSCEGVREAASLAEVQETPAQQVAEMAVDYSNLWTRLSNDYDLDKLGVTQVEEVEDVFPCTTMQEGMFLGQIRRPGAYHMRFFHRVQLKGGCLPTVERIQQAWASLVERHPSLRTVFVDDLSPEAIYHSIVLRSVPMEVRMREVPRDLSAEAALAIFTEELVPFRANAPLHRMLLLTCRGRVPYLMLEISHVIMDGYALSVFRREFIRACSSSAPLPRGPDYRMFANYHRTRQTDDSARYWTDYLADCVPCHIPTHAVSAPSDGPPEWPRTLQRRDFGFENSAAFLQRCKERQVTLACAIRAAWALVLRAYTQSEDVCFGYVSSGRNVPVPEVETIFGLCLSMQVCRARLSEASTIASLARKIQEDYVASLPFQHYPLAEAQRGLKQTHGQGLFNTAISMEWVPPSAEDEDALLDLEEIREQDDPTEYDIAISVDVHEGHIKLGFLYWPDLTDFEINHLAEALHGAMNCFASHPDEALNTLSLLQASDVCSALSDGPTLLPLEAVRGNVVSMIDRWVTRQPEGAAIDGWDGSMSYKELHEQSSWVARNLLHQGVRLGDRVLVCADRSSRTVATILGIVRAGCVLVLSNPTDPEKRLQWLAKKCNASLVVADPTYEERLATADAHVLSTTSVCAPAAWDYEFPALDEHDLISILFKSGSTGTPKGILMEHGALATSVFLGHGRTLRFSRHTRMLHFASLTFDAALAEIFTTLAHGGCICVPCEEDRLSDVPGCISRFAVNTAMLTPSVGRLLDPGALPTLQTLIMVGEPMSRLDVERFAPVLDLYNGAGPTETSIMVTIAGPMKPTDEPVNLGYAVAGVRLWVTEAENPNRLAPLGAVGELIVEGRLVTSGYLDDQARTQEAFLPTLPWLPSQHALYRTGDLVRYVDDGSLRYMGRKDTQVKLRGQRIELQEVEYHLRKSLQQAQIVVEMVVPAGKMRAQASLVAFVSGLTAADVESSSACNLEGTIPISQIVLPKSAFQALEEVLPRHMIPSVYYALDTIPLSVNGKADRRRLREMGSLLLASSAAHKNNIEGMSKSVKWTPTLELERTLLGLWAATLGLEAETIHGDDSFFELGGDSVSAMKLVATARDKYKLSLSVPQMFRYPTVCQLAAEVGEPAGQSASSASSTTEEGFTFSTPDDSSTNDGVDDDFLQLATAQLAQLAQEKGKKVDIAALLKQLQGGSSSNKTPSVSSSSSSSSSSKRKKNAAKAESLAEAAAPIPVQFSLLDGGADALDKVRAQAVEHCKITHDDIEDIYPATALQEGMMALTARTPGVYTTTLTGDLSEQVDIARLQYAWGKAAEAHPILRTRIILTDNNTAVQVVQRAKGLPWDTYSLREDNVLPDLTSNMTSGSPLLRLAVVHRQSQPRMLLVAIHHALYDGWSMPLLKQAVEDAYHGRDLRPQPFTPFIKHLIAGKPAAQDFWTTHLDNFVGGVFPKLPSIYHQIQPTERRTRSMTLPTAAPKAQYTMATKIQAAWAVTVSRYVEANDIVFGTVSTGRSAPVPAIDRMVGPTVTTVPVRISLGGQADRVLSLLQRVQEDSWNKLDHEHLGLQHIRRLGESAAAACNFQTLLVIQPREQPDTKYRSTLLSGLQDVAELEGVDTYPLMLVCEPDGASLNLTAVFDRAVLDGATLDRMLAHWELVLTQMWNEPNMAVIDIDAVSCSDKETLMRWNTGETITEGCAHNAVCEWSRRTPHAPAVCAWDGEWTYKELERYSSLIASQISAHGLSSGDFVALYHEKSRWTAAGILAVFKAGAILITLDPAHPTDRIKDILDQARPRLILTSQSLLDVARNLDTPVLSVQFAASQPLPEEWSSLPTICPTLAAYAPFTSGSTGRPKGIPLDHRGLAASTASIARSCLLRPASRVLHFASFAFDASMMEHLIAWHAGGCLCIPDETARQTDLAKCIRDFNVTWAFLTPSCLRLITPDDVPSLQALGLGGESMTSEDITIWSPRLRQIVQLYGPAECCIVAALTEVTKPSENRLIGRPNACRCWVVDPQNPDRLAPIGAVGELLIEGITVGRGYINDPDRTTPAFIRPPKWLQTLYPDDQEPKRLYRTGDLVRYAGVDGKLAFIGRRDGQLKLHGQRIELADVEAHLRSLIPGMQKMVVEMVHSADNQNPFLAAFLEEISTSQKPKEREIGLLHPSQSQCALDVKAIDSALSRTVPQYMIPSMYLHISRLPLSASGKLDRRHLREMVAELPRQSLNEYAAGSGLGVPDRPVTSQEHEMQAIWARVLSLDPNTFGVNDDFFRIGGDSISGMQVSTKCNAAGIHITSADLFRHRTIEQLICHLNTIRTTDSASVLLPTEPVNEWVALAPIQHLFFEVAPEGPNHFNQSLLLRTSRRVSVEELAGGLDVLIGRHSMLRARFCRKDSGQWFQQVKSLDSEPASAFYRLAAHNHITRESLPTLFTAAQMALSIEDGPLLTVDLVELEDGSQLVYLAAHHLIIDLVSWRILHGDLEEYLQTGSLSSATGSVPFLTWTQLQAEYSAEHLTPARALPGFQEANDDFDFMRYWGISSESNTFGQTSTSRFALDRTVTDILFGSANKVMDTRPVEILEAALWYSCNQALPDHPGPSIYVEGHGREPWTDSIDVSGTVGWFTIMSPLVSTPWHHLSRKSMRDFVDVLSYIKDQRRRIPANGWAYFTSRYLNDEGRVAYGRTKPVMEVLFNYMGQYQEMKREDAILQLAGDDIQSGTGASDIAGNVPRFSLIDVTAFTANGCLTFEFTFPQLIQQDARLEQCIKECEHTLVAAASSLSAEGPRKTLTDFPLMSALTYDQLSQCLNHTLPSMGLRAQDVWNIYPCSPVQRGMLLAQLRDRQAYQQRFKFQVMSRGPTEQLSLEKVKDAWTEVINRHDILRTLLLPVSDHSHFDQVVMVPGSLQHLVRGDAMDANPTEGLPHTINITSDSTGAIICEWNVSHALVDAMSIAFIQREVNQALEGSLGQHQNLPQYVEYIKWLTLQDNTEAQAYWQNHLNGVEPCLFPKLTSSPDKVNPEATISAIRATWSRDVRMDELCHKHAITLTNLFHIVWAIVLGAYVGTDEVCFGYTALGRDVPVHRVETLVGPLVNVLATTVRHQEDETILNALLTHQAHLTNSLQHQHYALADVYASLGLVGSQLFNTIVSLQDTSHFDAPDEQRTRLEMLPANDVSEYDVALNIGVDKSTIQLVCSYQTVSLSAEQADALLRTAFHVLDEILRDPTQRFCELEVISPKCKEHLVKWNAGMLAPTHEYIHEKIQGQCRIHNSRQAVCAWDGMFTYAEVDDLSSRLAARLIRMGVTSEDIIPIYSPKSRWMVIAILGVLKAGAAFTLLEISHPMARLRVICNQIKAPMLIAPASHAVPAANLAPILVVLDNITSLAEERPVSLPAVDIPPAREALAYLIFTSGSTGNPKGVMVTHQNLCSNASIITTSVNMTSDSRVLQFASHAFDGCLWEILGALLAGACLIIPSESENKEDLTGCIERMGVTWAFLTPSVARILKPETLPSLCNLVLGGEPIAASDLEMWRGHVQVVCAYGPTETTILASTTSPSTFPRDGKDIGTPTSSSLWIVDTRNYQTLVPLGATGELLIEGPNVSQGYLGDPEKTNNAFPDAPRWLSQLRKSPTRLYRTGDLVRFDTSTGTIRFVGRKDNQIKFHGQRIELGEIEYHAQFAFSSASTVIVDLITPEQPRQPYIVAFVHQLDAANETTDTNDTLLLPSSEVFRADALAAQNKMHKRLPHYMVPAVFLPLHRLPLSVTGKADRKRLRQCALALSSPELSAYRATASTKRMPSTAAERKMQELVATVLGRDPTEIGMDDSFFYLGGDSVQAMRLVAEGRQQGLTLSLRAIFDSPCLGDLSDQAKSLIEDNQRASTASRGNLRYDCDRIDKIVVTNSLNKADVVDVLPTTSFQRHWLDAQLKSYIVVDIPGPIDPARLLRAMHRVVEAHPILRVSFVPYETTTVQVILRTAVAITNVDLSTATVEELCRRDVDAQMAPGVPYLRVIIATQDKAGHKLIMRLSHAQYDAVSLSLLMNDLSHAYANDTHPLPSSHFPRFNDYITYQQAQRADPTATTFWRHLLQDVPLTHLNLQPAESSASNGTPITLSRDIDIAVFPSLPSDITIATMVKAAWSLALAQKTNSLAVIFGQVVHGRAIALPGVEGIVGPCANITPVVARLGLETTGLELMQALQDQHHSAMSYESVDLDDALAYANDSQAGRKGLQTIVQHQNNVMVDDMELSLGEVKCGVDFRAVDHLPKEVWVYSSVDEKRPGMLEVKIMSSTLVLGEEFAEELMGLLVEKIVGLLRHPESVCV</sequence>
<reference key="1">
    <citation type="journal article" date="2011" name="Eukaryot. Cell">
        <title>Genome sequence of the white koji mold Aspergillus kawachii IFO 4308, used for brewing the Japanese distilled spirit shochu.</title>
        <authorList>
            <person name="Futagami T."/>
            <person name="Mori K."/>
            <person name="Yamashita A."/>
            <person name="Wada S."/>
            <person name="Kajiwara Y."/>
            <person name="Takashita H."/>
            <person name="Omori T."/>
            <person name="Takegawa K."/>
            <person name="Tashiro K."/>
            <person name="Kuhara S."/>
            <person name="Goto M."/>
        </authorList>
    </citation>
    <scope>NUCLEOTIDE SEQUENCE [LARGE SCALE GENOMIC DNA]</scope>
    <source>
        <strain>NBRC 4308</strain>
    </source>
</reference>
<reference key="2">
    <citation type="journal article" date="2009" name="J. Antibiot.">
        <title>Solid-phase synthesis and biological activity of malformin C and its derivatives.</title>
        <authorList>
            <person name="Kojima Y."/>
            <person name="Sunazuka T."/>
            <person name="Nagai K."/>
            <person name="Hirose T."/>
            <person name="Namatame M."/>
            <person name="Ishiyama A."/>
            <person name="Otoguro K."/>
            <person name="Omura S."/>
        </authorList>
    </citation>
    <scope>BIOTECHNOLOGY</scope>
</reference>
<reference key="3">
    <citation type="journal article" date="2015" name="PLoS ONE">
        <title>Study of malformin C, a fungal source cyclic pentapeptide, as an anti-cancer drug.</title>
        <authorList>
            <person name="Wang J."/>
            <person name="Jiang Z."/>
            <person name="Lam W."/>
            <person name="Gullen E.A."/>
            <person name="Yu Z."/>
            <person name="Wei Y."/>
            <person name="Wang L."/>
            <person name="Zeiss C."/>
            <person name="Beck A."/>
            <person name="Cheng E.C."/>
            <person name="Wu C."/>
            <person name="Cheng Y.C."/>
            <person name="Zhang Y."/>
        </authorList>
    </citation>
    <scope>BIOTECHNOLOGY</scope>
</reference>
<reference key="4">
    <citation type="journal article" date="2016" name="Cancer Chemother. Pharmacol.">
        <title>Malformin A1 promotes cell death through induction of apoptosis, necrosis and autophagy in prostate cancer cells.</title>
        <authorList>
            <person name="Liu Y."/>
            <person name="Wang M."/>
            <person name="Wang D."/>
            <person name="Li X."/>
            <person name="Wang W."/>
            <person name="Lou H."/>
            <person name="Yuan H."/>
        </authorList>
    </citation>
    <scope>BIOTECHNOLOGY</scope>
</reference>
<reference key="5">
    <citation type="journal article" date="2017" name="Int. J. Oncol.">
        <title>Malformin A1 treatment alters invasive and oncogenic phenotypes of human colorectal cancer cells through stimulation of the p38 signaling pathway.</title>
        <authorList>
            <person name="Park S.Y."/>
            <person name="Oh H.H."/>
            <person name="Park Y.L."/>
            <person name="Yu H.M."/>
            <person name="Myung D.S."/>
            <person name="Cho S.B."/>
            <person name="Lee W.S."/>
            <person name="Park D."/>
            <person name="Joo Y.E."/>
        </authorList>
    </citation>
    <scope>BIOTECHNOLOGY</scope>
</reference>
<reference key="6">
    <citation type="journal article" date="2018" name="Sci. Rep.">
        <title>Uncovering secondary metabolite evolution and biosynthesis using gene cluster networks and genetic dereplication.</title>
        <authorList>
            <person name="Theobald S."/>
            <person name="Vesth T.C."/>
            <person name="Rendsvig J.K."/>
            <person name="Nielsen K.F."/>
            <person name="Riley R."/>
            <person name="de Abreu L.M."/>
            <person name="Salamov A."/>
            <person name="Frisvad J.C."/>
            <person name="Larsen T.O."/>
            <person name="Andersen M.R."/>
            <person name="Hoof J.B."/>
        </authorList>
    </citation>
    <scope>IDENTIFICATION</scope>
    <scope>FUNCTION</scope>
    <scope>PATHWAY</scope>
</reference>
<comment type="function">
    <text evidence="8 11">Nonribosomal peptide synthetase; part of the gene cluster that mediates the biosynthesis of malformins, cyclic pentapeptides with a disulfide bond between 2 consecutive cysteins, that show potential anti-tumor as well as antimalarial and antitrypanosomal properties (PubMed:30560908). The nonribosomal peptide synthetase mlfA is responsible of the formation of the cyclic pentapeptide (Probable). The malformin biosynthesis clusters in malformin-producing fungi also contain enzymes involved in the formation of the disulfide bond between the two consecutive cysteins within malformins, in addition to additional tailoring enzymes such as methyltransferases or oxidoreductases. They are also composed of up to 4 major facilitator superfamily transporters, and transcription factors probably involved in the regulation of the expression of those clusters (Probable).</text>
</comment>
<comment type="pathway">
    <text evidence="11">Secondary metabolite biosynthesis.</text>
</comment>
<comment type="domain">
    <text evidence="11">NRP synthetases are composed of discrete domains (adenylation (A), thiolation (T) or peptidyl carrier protein (PCP) and condensation (C) domains) which when grouped together are referred to as a single module. Each module is responsible for the recognition (via the A domain) and incorporation of a single amino acid into the growing peptide product. Thus, an NRP synthetase is generally composed of one or more modules and can terminate in a thioesterase domain (TE) that releases the newly synthesized peptide from the enzyme. Occasionally, epimerase (E) domains (responsible for L- to D- amino acid conversion) are present within the NRP synthetase. MlfA has the following architecture: A-T-C-A-T-C-A-T-C-C-A-T-C, with the functions of the five condensation domains during malformin biosynthesis being DL-joining (epimerizing subtype), LL-joining, epimerization, DL-joining and cyclizing domain, respectively.</text>
</comment>
<comment type="biotechnology">
    <text evidence="4 5 6 7">Malformins show anti-tumor properties against human colorectal and prostate cancer cells by the inhibition of proliferation and induction of apoptosis through the activation of the p38 signaling pathway (PubMed:26540166, PubMed:26645406, PubMed:28713983). Malformin C has also been shown to exhibit potent antimalarial and antitrypanosomal properties (PubMed:19876076).</text>
</comment>
<comment type="similarity">
    <text evidence="10">Belongs to the NRP synthetase family.</text>
</comment>
<name>MLFA_ASPKW</name>
<accession>G7XQ31</accession>
<proteinExistence type="evidence at protein level"/>
<evidence type="ECO:0000255" key="1"/>
<evidence type="ECO:0000255" key="2">
    <source>
        <dbReference type="PROSITE-ProRule" id="PRU00258"/>
    </source>
</evidence>
<evidence type="ECO:0000256" key="3">
    <source>
        <dbReference type="SAM" id="MobiDB-lite"/>
    </source>
</evidence>
<evidence type="ECO:0000269" key="4">
    <source>
    </source>
</evidence>
<evidence type="ECO:0000269" key="5">
    <source>
    </source>
</evidence>
<evidence type="ECO:0000269" key="6">
    <source>
    </source>
</evidence>
<evidence type="ECO:0000269" key="7">
    <source>
    </source>
</evidence>
<evidence type="ECO:0000269" key="8">
    <source>
    </source>
</evidence>
<evidence type="ECO:0000303" key="9">
    <source>
    </source>
</evidence>
<evidence type="ECO:0000305" key="10"/>
<evidence type="ECO:0000305" key="11">
    <source>
    </source>
</evidence>
<protein>
    <recommendedName>
        <fullName evidence="9">Malformin synthetase mlfA</fullName>
        <ecNumber evidence="8">6.3.2.-</ecNumber>
    </recommendedName>
    <alternativeName>
        <fullName evidence="9">Malformin biosynthesis cluster protein A</fullName>
    </alternativeName>
    <alternativeName>
        <fullName evidence="9">Nonribosomal peptide synthetase mlfA</fullName>
    </alternativeName>
</protein>